<reference key="1">
    <citation type="journal article" date="2004" name="Proc. Natl. Acad. Sci. U.S.A.">
        <title>Genome sequence of the enterobacterial phytopathogen Erwinia carotovora subsp. atroseptica and characterization of virulence factors.</title>
        <authorList>
            <person name="Bell K.S."/>
            <person name="Sebaihia M."/>
            <person name="Pritchard L."/>
            <person name="Holden M.T.G."/>
            <person name="Hyman L.J."/>
            <person name="Holeva M.C."/>
            <person name="Thomson N.R."/>
            <person name="Bentley S.D."/>
            <person name="Churcher L.J.C."/>
            <person name="Mungall K."/>
            <person name="Atkin R."/>
            <person name="Bason N."/>
            <person name="Brooks K."/>
            <person name="Chillingworth T."/>
            <person name="Clark K."/>
            <person name="Doggett J."/>
            <person name="Fraser A."/>
            <person name="Hance Z."/>
            <person name="Hauser H."/>
            <person name="Jagels K."/>
            <person name="Moule S."/>
            <person name="Norbertczak H."/>
            <person name="Ormond D."/>
            <person name="Price C."/>
            <person name="Quail M.A."/>
            <person name="Sanders M."/>
            <person name="Walker D."/>
            <person name="Whitehead S."/>
            <person name="Salmond G.P.C."/>
            <person name="Birch P.R.J."/>
            <person name="Parkhill J."/>
            <person name="Toth I.K."/>
        </authorList>
    </citation>
    <scope>NUCLEOTIDE SEQUENCE [LARGE SCALE GENOMIC DNA]</scope>
    <source>
        <strain>SCRI 1043 / ATCC BAA-672</strain>
    </source>
</reference>
<evidence type="ECO:0000255" key="1">
    <source>
        <dbReference type="HAMAP-Rule" id="MF_01012"/>
    </source>
</evidence>
<keyword id="KW-0004">4Fe-4S</keyword>
<keyword id="KW-0408">Iron</keyword>
<keyword id="KW-0411">Iron-sulfur</keyword>
<keyword id="KW-0479">Metal-binding</keyword>
<keyword id="KW-0489">Methyltransferase</keyword>
<keyword id="KW-1185">Reference proteome</keyword>
<keyword id="KW-0698">rRNA processing</keyword>
<keyword id="KW-0949">S-adenosyl-L-methionine</keyword>
<keyword id="KW-0808">Transferase</keyword>
<gene>
    <name evidence="1" type="primary">rlmC</name>
    <name type="synonym">rumB</name>
    <name type="ordered locus">ECA2672</name>
</gene>
<name>RLMC_PECAS</name>
<feature type="chain" id="PRO_0000161928" description="23S rRNA (uracil(747)-C(5))-methyltransferase RlmC">
    <location>
        <begin position="1"/>
        <end position="375"/>
    </location>
</feature>
<feature type="active site" description="Nucleophile" evidence="1">
    <location>
        <position position="334"/>
    </location>
</feature>
<feature type="binding site" evidence="1">
    <location>
        <position position="3"/>
    </location>
    <ligand>
        <name>[4Fe-4S] cluster</name>
        <dbReference type="ChEBI" id="CHEBI:49883"/>
    </ligand>
</feature>
<feature type="binding site" evidence="1">
    <location>
        <position position="11"/>
    </location>
    <ligand>
        <name>[4Fe-4S] cluster</name>
        <dbReference type="ChEBI" id="CHEBI:49883"/>
    </ligand>
</feature>
<feature type="binding site" evidence="1">
    <location>
        <position position="14"/>
    </location>
    <ligand>
        <name>[4Fe-4S] cluster</name>
        <dbReference type="ChEBI" id="CHEBI:49883"/>
    </ligand>
</feature>
<feature type="binding site" evidence="1">
    <location>
        <position position="87"/>
    </location>
    <ligand>
        <name>[4Fe-4S] cluster</name>
        <dbReference type="ChEBI" id="CHEBI:49883"/>
    </ligand>
</feature>
<feature type="binding site" evidence="1">
    <location>
        <position position="212"/>
    </location>
    <ligand>
        <name>S-adenosyl-L-methionine</name>
        <dbReference type="ChEBI" id="CHEBI:59789"/>
    </ligand>
</feature>
<feature type="binding site" evidence="1">
    <location>
        <position position="241"/>
    </location>
    <ligand>
        <name>S-adenosyl-L-methionine</name>
        <dbReference type="ChEBI" id="CHEBI:59789"/>
    </ligand>
</feature>
<feature type="binding site" evidence="1">
    <location>
        <position position="262"/>
    </location>
    <ligand>
        <name>S-adenosyl-L-methionine</name>
        <dbReference type="ChEBI" id="CHEBI:59789"/>
    </ligand>
</feature>
<feature type="binding site" evidence="1">
    <location>
        <position position="307"/>
    </location>
    <ligand>
        <name>S-adenosyl-L-methionine</name>
        <dbReference type="ChEBI" id="CHEBI:59789"/>
    </ligand>
</feature>
<sequence>MHCARYSTGTCRSCQWLEKPYPQQLSDKQQHLEDLLQPHAVQRWLPVQPSAQTAFRNKAKMVVSGSVERPLLGMLHRDGTAVDLCDCPLYPTSFAPVFDVLKVFIARAGLTPYNVARRRGELKYLLLTESTQRGTFMLRFVLRSETKLAQLRAAMPWLQQQLPQLEVISANIQPVHQAIMEGKTEIILSDAAALAEQFNQVPLYIRPQSFFQTNPQVAAALYATARDWVAELKITSMWDLFCGVGGFGLHCASSEMRLTGIEISAEAIACARRSAEQLGLKHVEFQALDSTQFATAKAEIPDLVLVNPPRRGIGSELCSYLSRMAPDYILYSSCNAESMAKDMTELANYRALRVQLFDMFPHTAHYEVLTLLKRA</sequence>
<proteinExistence type="inferred from homology"/>
<accession>Q6D3S2</accession>
<dbReference type="EC" id="2.1.1.189" evidence="1"/>
<dbReference type="EMBL" id="BX950851">
    <property type="protein sequence ID" value="CAG75572.1"/>
    <property type="molecule type" value="Genomic_DNA"/>
</dbReference>
<dbReference type="RefSeq" id="WP_011094214.1">
    <property type="nucleotide sequence ID" value="NC_004547.2"/>
</dbReference>
<dbReference type="SMR" id="Q6D3S2"/>
<dbReference type="STRING" id="218491.ECA2672"/>
<dbReference type="GeneID" id="57208636"/>
<dbReference type="KEGG" id="eca:ECA2672"/>
<dbReference type="PATRIC" id="fig|218491.5.peg.2705"/>
<dbReference type="eggNOG" id="COG2265">
    <property type="taxonomic scope" value="Bacteria"/>
</dbReference>
<dbReference type="HOGENOM" id="CLU_014689_0_0_6"/>
<dbReference type="OrthoDB" id="9804590at2"/>
<dbReference type="Proteomes" id="UP000007966">
    <property type="component" value="Chromosome"/>
</dbReference>
<dbReference type="GO" id="GO:0051539">
    <property type="term" value="F:4 iron, 4 sulfur cluster binding"/>
    <property type="evidence" value="ECO:0007669"/>
    <property type="project" value="UniProtKB-KW"/>
</dbReference>
<dbReference type="GO" id="GO:0005506">
    <property type="term" value="F:iron ion binding"/>
    <property type="evidence" value="ECO:0007669"/>
    <property type="project" value="UniProtKB-UniRule"/>
</dbReference>
<dbReference type="GO" id="GO:0070041">
    <property type="term" value="F:rRNA (uridine-C5-)-methyltransferase activity"/>
    <property type="evidence" value="ECO:0007669"/>
    <property type="project" value="UniProtKB-UniRule"/>
</dbReference>
<dbReference type="GO" id="GO:0070475">
    <property type="term" value="P:rRNA base methylation"/>
    <property type="evidence" value="ECO:0007669"/>
    <property type="project" value="TreeGrafter"/>
</dbReference>
<dbReference type="CDD" id="cd02440">
    <property type="entry name" value="AdoMet_MTases"/>
    <property type="match status" value="1"/>
</dbReference>
<dbReference type="FunFam" id="2.40.50.1070:FF:000002">
    <property type="entry name" value="23S rRNA (uracil(747)-C(5))-methyltransferase RlmC"/>
    <property type="match status" value="1"/>
</dbReference>
<dbReference type="Gene3D" id="2.40.50.1070">
    <property type="match status" value="1"/>
</dbReference>
<dbReference type="Gene3D" id="3.40.50.150">
    <property type="entry name" value="Vaccinia Virus protein VP39"/>
    <property type="match status" value="1"/>
</dbReference>
<dbReference type="HAMAP" id="MF_01012">
    <property type="entry name" value="23SrRNA_methyltr_RlmC"/>
    <property type="match status" value="1"/>
</dbReference>
<dbReference type="InterPro" id="IPR011825">
    <property type="entry name" value="23SrRNA_MeTrfase_RlmC"/>
</dbReference>
<dbReference type="InterPro" id="IPR030390">
    <property type="entry name" value="MeTrfase_TrmA_AS"/>
</dbReference>
<dbReference type="InterPro" id="IPR030391">
    <property type="entry name" value="MeTrfase_TrmA_CS"/>
</dbReference>
<dbReference type="InterPro" id="IPR029063">
    <property type="entry name" value="SAM-dependent_MTases_sf"/>
</dbReference>
<dbReference type="InterPro" id="IPR010280">
    <property type="entry name" value="U5_MeTrfase_fam"/>
</dbReference>
<dbReference type="NCBIfam" id="TIGR02085">
    <property type="entry name" value="meth_trns_rumB"/>
    <property type="match status" value="1"/>
</dbReference>
<dbReference type="PANTHER" id="PTHR11061">
    <property type="entry name" value="RNA M5U METHYLTRANSFERASE"/>
    <property type="match status" value="1"/>
</dbReference>
<dbReference type="PANTHER" id="PTHR11061:SF30">
    <property type="entry name" value="TRNA (URACIL(54)-C(5))-METHYLTRANSFERASE"/>
    <property type="match status" value="1"/>
</dbReference>
<dbReference type="Pfam" id="PF05958">
    <property type="entry name" value="tRNA_U5-meth_tr"/>
    <property type="match status" value="1"/>
</dbReference>
<dbReference type="SUPFAM" id="SSF53335">
    <property type="entry name" value="S-adenosyl-L-methionine-dependent methyltransferases"/>
    <property type="match status" value="1"/>
</dbReference>
<dbReference type="PROSITE" id="PS51687">
    <property type="entry name" value="SAM_MT_RNA_M5U"/>
    <property type="match status" value="1"/>
</dbReference>
<dbReference type="PROSITE" id="PS01230">
    <property type="entry name" value="TRMA_1"/>
    <property type="match status" value="1"/>
</dbReference>
<dbReference type="PROSITE" id="PS01231">
    <property type="entry name" value="TRMA_2"/>
    <property type="match status" value="1"/>
</dbReference>
<protein>
    <recommendedName>
        <fullName evidence="1">23S rRNA (uracil(747)-C(5))-methyltransferase RlmC</fullName>
        <ecNumber evidence="1">2.1.1.189</ecNumber>
    </recommendedName>
    <alternativeName>
        <fullName evidence="1">23S rRNA(m5U747)-methyltransferase</fullName>
    </alternativeName>
</protein>
<organism>
    <name type="scientific">Pectobacterium atrosepticum (strain SCRI 1043 / ATCC BAA-672)</name>
    <name type="common">Erwinia carotovora subsp. atroseptica</name>
    <dbReference type="NCBI Taxonomy" id="218491"/>
    <lineage>
        <taxon>Bacteria</taxon>
        <taxon>Pseudomonadati</taxon>
        <taxon>Pseudomonadota</taxon>
        <taxon>Gammaproteobacteria</taxon>
        <taxon>Enterobacterales</taxon>
        <taxon>Pectobacteriaceae</taxon>
        <taxon>Pectobacterium</taxon>
    </lineage>
</organism>
<comment type="function">
    <text evidence="1">Catalyzes the formation of 5-methyl-uridine at position 747 (m5U747) in 23S rRNA.</text>
</comment>
<comment type="catalytic activity">
    <reaction evidence="1">
        <text>uridine(747) in 23S rRNA + S-adenosyl-L-methionine = 5-methyluridine(747) in 23S rRNA + S-adenosyl-L-homocysteine + H(+)</text>
        <dbReference type="Rhea" id="RHEA:42628"/>
        <dbReference type="Rhea" id="RHEA-COMP:10154"/>
        <dbReference type="Rhea" id="RHEA-COMP:10155"/>
        <dbReference type="ChEBI" id="CHEBI:15378"/>
        <dbReference type="ChEBI" id="CHEBI:57856"/>
        <dbReference type="ChEBI" id="CHEBI:59789"/>
        <dbReference type="ChEBI" id="CHEBI:65315"/>
        <dbReference type="ChEBI" id="CHEBI:74447"/>
        <dbReference type="EC" id="2.1.1.189"/>
    </reaction>
</comment>
<comment type="similarity">
    <text evidence="1">Belongs to the class I-like SAM-binding methyltransferase superfamily. RNA M5U methyltransferase family. RlmC subfamily.</text>
</comment>